<organism>
    <name type="scientific">Aedes aegypti</name>
    <name type="common">Yellowfever mosquito</name>
    <name type="synonym">Culex aegypti</name>
    <dbReference type="NCBI Taxonomy" id="7159"/>
    <lineage>
        <taxon>Eukaryota</taxon>
        <taxon>Metazoa</taxon>
        <taxon>Ecdysozoa</taxon>
        <taxon>Arthropoda</taxon>
        <taxon>Hexapoda</taxon>
        <taxon>Insecta</taxon>
        <taxon>Pterygota</taxon>
        <taxon>Neoptera</taxon>
        <taxon>Endopterygota</taxon>
        <taxon>Diptera</taxon>
        <taxon>Nematocera</taxon>
        <taxon>Culicoidea</taxon>
        <taxon>Culicidae</taxon>
        <taxon>Culicinae</taxon>
        <taxon>Aedini</taxon>
        <taxon>Aedes</taxon>
        <taxon>Stegomyia</taxon>
    </lineage>
</organism>
<evidence type="ECO:0000255" key="1">
    <source>
        <dbReference type="HAMAP-Rule" id="MF_03069"/>
    </source>
</evidence>
<evidence type="ECO:0000256" key="2">
    <source>
        <dbReference type="SAM" id="MobiDB-lite"/>
    </source>
</evidence>
<sequence length="898" mass="101881">MSNVGDKFELSRDEFRNITQCLGNEEFRKLFAEYCQELKDPENRKQYEEELKLMEAERGYDVKFIKPLPGYVIKTVVDGKTKAFVNVCHCDLVGKPSSQCSTNKRGEKGLKWSIPYAQSQPRKDYDNKNVDCVVYDVVFHYDTLHLTKSNKNFRKLVTDTALDAVEGAFHVSLDRVNLKFPKLQYKGVAKMTVIRQKLKNFETRRKDGLIDTLYRASEQSKITHDNSADKENVNKQTFKSASQLEYTTPAYKLIHRKEVEYHELTGELDAKLDAAIPKELVLVIELPLLKSANQCTLNVTSSEVHLISDSPAKYKLEVKLPYTVLEKNGSAKFNTDETTLTVLLPVARNRRTLNDVTVSSNDQSMPDEMDQKPVERVKPLKEPQLVHSNANKKIIFPKFSANKMDNIFAFTLNVRNVDPSSIELQKGTDTVSCRFTNIGNGFFPCYYIFFLRFPNANITEVQHEEWDNNIILQVVLDHGLIDCYYAGTNENDLVQYSIMEDITDKINKFGKEIEDDSLCIAVSKNAIKQERKSSHLSIEIKTKDEIESDEGIDSALEGELKTDQSMQEDENPDEINTRTVEDDTKVAKENVKKVDQETAHEGKKSKKNQRRKNKKRSLSESCCDHLKVTINNDNPKPESGNEANSFEGTGSSSEATSKQRKARSVSESCPARDNNGVESDSVDNLSALIQFNHKYKGILKRSSLQRSISECSSIDEHYYLGTSVDGSSVAESVDHTNGELSESCRKTVRFNDAIKTKLFRSNTSILGQKKKNAKKNESKRRALTRRLSEGESTDNEDKDHQTTNEAPGSVVQRDTEHDSGISLDSDAAHPIEINADTEVQNQHQNDSTKPIEINRKVEKKFIASKNNNCNVKAQFIKSKRNDSSDIEFKSDMIFDIEM</sequence>
<protein>
    <recommendedName>
        <fullName evidence="1">Protein kintoun</fullName>
    </recommendedName>
    <alternativeName>
        <fullName evidence="1">Dynein assembly factor 2, axonemal homolog</fullName>
    </alternativeName>
</protein>
<accession>Q0IEW8</accession>
<keyword id="KW-0963">Cytoplasm</keyword>
<keyword id="KW-1185">Reference proteome</keyword>
<gene>
    <name type="ORF">AAEL007767</name>
</gene>
<feature type="chain" id="PRO_0000365802" description="Protein kintoun">
    <location>
        <begin position="1"/>
        <end position="898"/>
    </location>
</feature>
<feature type="region of interest" description="Disordered" evidence="2">
    <location>
        <begin position="558"/>
        <end position="680"/>
    </location>
</feature>
<feature type="region of interest" description="Disordered" evidence="2">
    <location>
        <begin position="765"/>
        <end position="822"/>
    </location>
</feature>
<feature type="compositionally biased region" description="Basic and acidic residues" evidence="2">
    <location>
        <begin position="575"/>
        <end position="602"/>
    </location>
</feature>
<feature type="compositionally biased region" description="Basic residues" evidence="2">
    <location>
        <begin position="603"/>
        <end position="616"/>
    </location>
</feature>
<feature type="compositionally biased region" description="Polar residues" evidence="2">
    <location>
        <begin position="641"/>
        <end position="656"/>
    </location>
</feature>
<reference key="1">
    <citation type="journal article" date="2007" name="Science">
        <title>Genome sequence of Aedes aegypti, a major arbovirus vector.</title>
        <authorList>
            <person name="Nene V."/>
            <person name="Wortman J.R."/>
            <person name="Lawson D."/>
            <person name="Haas B.J."/>
            <person name="Kodira C.D."/>
            <person name="Tu Z.J."/>
            <person name="Loftus B.J."/>
            <person name="Xi Z."/>
            <person name="Megy K."/>
            <person name="Grabherr M."/>
            <person name="Ren Q."/>
            <person name="Zdobnov E.M."/>
            <person name="Lobo N.F."/>
            <person name="Campbell K.S."/>
            <person name="Brown S.E."/>
            <person name="Bonaldo M.F."/>
            <person name="Zhu J."/>
            <person name="Sinkins S.P."/>
            <person name="Hogenkamp D.G."/>
            <person name="Amedeo P."/>
            <person name="Arensburger P."/>
            <person name="Atkinson P.W."/>
            <person name="Bidwell S.L."/>
            <person name="Biedler J."/>
            <person name="Birney E."/>
            <person name="Bruggner R.V."/>
            <person name="Costas J."/>
            <person name="Coy M.R."/>
            <person name="Crabtree J."/>
            <person name="Crawford M."/>
            <person name="DeBruyn B."/>
            <person name="DeCaprio D."/>
            <person name="Eiglmeier K."/>
            <person name="Eisenstadt E."/>
            <person name="El-Dorry H."/>
            <person name="Gelbart W.M."/>
            <person name="Gomes S.L."/>
            <person name="Hammond M."/>
            <person name="Hannick L.I."/>
            <person name="Hogan J.R."/>
            <person name="Holmes M.H."/>
            <person name="Jaffe D."/>
            <person name="Johnston S.J."/>
            <person name="Kennedy R.C."/>
            <person name="Koo H."/>
            <person name="Kravitz S."/>
            <person name="Kriventseva E.V."/>
            <person name="Kulp D."/>
            <person name="Labutti K."/>
            <person name="Lee E."/>
            <person name="Li S."/>
            <person name="Lovin D.D."/>
            <person name="Mao C."/>
            <person name="Mauceli E."/>
            <person name="Menck C.F."/>
            <person name="Miller J.R."/>
            <person name="Montgomery P."/>
            <person name="Mori A."/>
            <person name="Nascimento A.L."/>
            <person name="Naveira H.F."/>
            <person name="Nusbaum C."/>
            <person name="O'Leary S.B."/>
            <person name="Orvis J."/>
            <person name="Pertea M."/>
            <person name="Quesneville H."/>
            <person name="Reidenbach K.R."/>
            <person name="Rogers Y.-H.C."/>
            <person name="Roth C.W."/>
            <person name="Schneider J.R."/>
            <person name="Schatz M."/>
            <person name="Shumway M."/>
            <person name="Stanke M."/>
            <person name="Stinson E.O."/>
            <person name="Tubio J.M.C."/>
            <person name="Vanzee J.P."/>
            <person name="Verjovski-Almeida S."/>
            <person name="Werner D."/>
            <person name="White O.R."/>
            <person name="Wyder S."/>
            <person name="Zeng Q."/>
            <person name="Zhao Q."/>
            <person name="Zhao Y."/>
            <person name="Hill C.A."/>
            <person name="Raikhel A.S."/>
            <person name="Soares M.B."/>
            <person name="Knudson D.L."/>
            <person name="Lee N.H."/>
            <person name="Galagan J."/>
            <person name="Salzberg S.L."/>
            <person name="Paulsen I.T."/>
            <person name="Dimopoulos G."/>
            <person name="Collins F.H."/>
            <person name="Bruce B."/>
            <person name="Fraser-Liggett C.M."/>
            <person name="Severson D.W."/>
        </authorList>
    </citation>
    <scope>NUCLEOTIDE SEQUENCE [LARGE SCALE GENOMIC DNA]</scope>
    <source>
        <strain>LVPib12</strain>
    </source>
</reference>
<name>KTU_AEDAE</name>
<proteinExistence type="inferred from homology"/>
<dbReference type="EMBL" id="CH477464">
    <property type="protein sequence ID" value="EAT40503.1"/>
    <property type="molecule type" value="Genomic_DNA"/>
</dbReference>
<dbReference type="RefSeq" id="XP_001658637.1">
    <property type="nucleotide sequence ID" value="XM_001658587.1"/>
</dbReference>
<dbReference type="SMR" id="Q0IEW8"/>
<dbReference type="FunCoup" id="Q0IEW8">
    <property type="interactions" value="378"/>
</dbReference>
<dbReference type="STRING" id="7159.Q0IEW8"/>
<dbReference type="PaxDb" id="7159-AAEL007767-PA"/>
<dbReference type="GeneID" id="5569576"/>
<dbReference type="KEGG" id="aag:5569576"/>
<dbReference type="VEuPathDB" id="VectorBase:AAEL007767"/>
<dbReference type="eggNOG" id="KOG4356">
    <property type="taxonomic scope" value="Eukaryota"/>
</dbReference>
<dbReference type="HOGENOM" id="CLU_012715_0_0_1"/>
<dbReference type="InParanoid" id="Q0IEW8"/>
<dbReference type="OMA" id="CFLNISK"/>
<dbReference type="OrthoDB" id="546764at2759"/>
<dbReference type="PhylomeDB" id="Q0IEW8"/>
<dbReference type="Proteomes" id="UP000008820">
    <property type="component" value="Unassembled WGS sequence"/>
</dbReference>
<dbReference type="Proteomes" id="UP000682892">
    <property type="component" value="Chromosome 1"/>
</dbReference>
<dbReference type="GO" id="GO:0005737">
    <property type="term" value="C:cytoplasm"/>
    <property type="evidence" value="ECO:0007669"/>
    <property type="project" value="UniProtKB-SubCell"/>
</dbReference>
<dbReference type="GO" id="GO:0070286">
    <property type="term" value="P:axonemal dynein complex assembly"/>
    <property type="evidence" value="ECO:0007669"/>
    <property type="project" value="UniProtKB-UniRule"/>
</dbReference>
<dbReference type="GO" id="GO:0060285">
    <property type="term" value="P:cilium-dependent cell motility"/>
    <property type="evidence" value="ECO:0007669"/>
    <property type="project" value="UniProtKB-UniRule"/>
</dbReference>
<dbReference type="HAMAP" id="MF_03069">
    <property type="entry name" value="Kintoun"/>
    <property type="match status" value="1"/>
</dbReference>
<dbReference type="InterPro" id="IPR034727">
    <property type="entry name" value="Kintoun"/>
</dbReference>
<dbReference type="InterPro" id="IPR050734">
    <property type="entry name" value="PIH1/Kintoun_subfamily"/>
</dbReference>
<dbReference type="InterPro" id="IPR012981">
    <property type="entry name" value="PIH1_N"/>
</dbReference>
<dbReference type="InterPro" id="IPR041442">
    <property type="entry name" value="PIH1D1/2/3_CS-like"/>
</dbReference>
<dbReference type="PANTHER" id="PTHR22997">
    <property type="entry name" value="PIH1 DOMAIN-CONTAINING PROTEIN 1"/>
    <property type="match status" value="1"/>
</dbReference>
<dbReference type="PANTHER" id="PTHR22997:SF3">
    <property type="entry name" value="PROTEIN KINTOUN"/>
    <property type="match status" value="1"/>
</dbReference>
<dbReference type="Pfam" id="PF08190">
    <property type="entry name" value="PIH1"/>
    <property type="match status" value="1"/>
</dbReference>
<dbReference type="Pfam" id="PF18201">
    <property type="entry name" value="PIH1_CS"/>
    <property type="match status" value="1"/>
</dbReference>
<comment type="function">
    <text evidence="1">Required for cytoplasmic pre-assembly of axonemal dyneins, thereby playing a central role in motility in cilia and flagella. Involved in pre-assembly of dynein arm complexes in the cytoplasm before intraflagellar transport loads them for the ciliary compartment.</text>
</comment>
<comment type="subcellular location">
    <subcellularLocation>
        <location evidence="1">Cytoplasm</location>
    </subcellularLocation>
</comment>
<comment type="similarity">
    <text evidence="1">Belongs to the PIH1 family. Kintoun subfamily.</text>
</comment>